<proteinExistence type="evidence at protein level"/>
<name>NUP43_ARATH</name>
<protein>
    <recommendedName>
        <fullName evidence="4">Nuclear pore complex protein NUP43</fullName>
    </recommendedName>
    <alternativeName>
        <fullName>Nucleoporin 43</fullName>
    </alternativeName>
</protein>
<keyword id="KW-0509">mRNA transport</keyword>
<keyword id="KW-0906">Nuclear pore complex</keyword>
<keyword id="KW-0539">Nucleus</keyword>
<keyword id="KW-0653">Protein transport</keyword>
<keyword id="KW-1185">Reference proteome</keyword>
<keyword id="KW-0677">Repeat</keyword>
<keyword id="KW-0811">Translocation</keyword>
<keyword id="KW-0813">Transport</keyword>
<keyword id="KW-0853">WD repeat</keyword>
<feature type="chain" id="PRO_0000431093" description="Nuclear pore complex protein NUP43">
    <location>
        <begin position="1"/>
        <end position="361"/>
    </location>
</feature>
<feature type="repeat" description="WD 1" evidence="1">
    <location>
        <begin position="132"/>
        <end position="173"/>
    </location>
</feature>
<feature type="repeat" description="WD 2" evidence="1">
    <location>
        <begin position="177"/>
        <end position="215"/>
    </location>
</feature>
<feature type="repeat" description="WD 3" evidence="1">
    <location>
        <begin position="225"/>
        <end position="265"/>
    </location>
</feature>
<feature type="region of interest" description="Disordered" evidence="2">
    <location>
        <begin position="51"/>
        <end position="73"/>
    </location>
</feature>
<feature type="sequence conflict" description="In Ref. 4; AAM63718." ref="4">
    <original>F</original>
    <variation>V</variation>
    <location>
        <position position="124"/>
    </location>
</feature>
<accession>Q24JJ9</accession>
<accession>O65565</accession>
<accession>Q8LCD6</accession>
<gene>
    <name evidence="4" type="primary">NUP43</name>
    <name evidence="7" type="ordered locus">At4g30840</name>
    <name evidence="9" type="ORF">F6I18.250</name>
</gene>
<dbReference type="EMBL" id="AL022198">
    <property type="protein sequence ID" value="CAA18209.1"/>
    <property type="status" value="ALT_SEQ"/>
    <property type="molecule type" value="Genomic_DNA"/>
</dbReference>
<dbReference type="EMBL" id="AL161577">
    <property type="protein sequence ID" value="CAB79802.1"/>
    <property type="status" value="ALT_SEQ"/>
    <property type="molecule type" value="Genomic_DNA"/>
</dbReference>
<dbReference type="EMBL" id="CP002687">
    <property type="protein sequence ID" value="AEE85817.1"/>
    <property type="molecule type" value="Genomic_DNA"/>
</dbReference>
<dbReference type="EMBL" id="BT024890">
    <property type="protein sequence ID" value="ABD85161.1"/>
    <property type="molecule type" value="mRNA"/>
</dbReference>
<dbReference type="EMBL" id="AY086661">
    <property type="protein sequence ID" value="AAM63718.1"/>
    <property type="status" value="ALT_INIT"/>
    <property type="molecule type" value="mRNA"/>
</dbReference>
<dbReference type="PIR" id="A85361">
    <property type="entry name" value="A85361"/>
</dbReference>
<dbReference type="RefSeq" id="NP_567858.1">
    <property type="nucleotide sequence ID" value="NM_119231.3"/>
</dbReference>
<dbReference type="SMR" id="Q24JJ9"/>
<dbReference type="BioGRID" id="14495">
    <property type="interactions" value="176"/>
</dbReference>
<dbReference type="FunCoup" id="Q24JJ9">
    <property type="interactions" value="517"/>
</dbReference>
<dbReference type="STRING" id="3702.Q24JJ9"/>
<dbReference type="PaxDb" id="3702-AT4G30840.1"/>
<dbReference type="ProteomicsDB" id="248750"/>
<dbReference type="EnsemblPlants" id="AT4G30840.1">
    <property type="protein sequence ID" value="AT4G30840.1"/>
    <property type="gene ID" value="AT4G30840"/>
</dbReference>
<dbReference type="GeneID" id="829208"/>
<dbReference type="Gramene" id="AT4G30840.1">
    <property type="protein sequence ID" value="AT4G30840.1"/>
    <property type="gene ID" value="AT4G30840"/>
</dbReference>
<dbReference type="KEGG" id="ath:AT4G30840"/>
<dbReference type="Araport" id="AT4G30840"/>
<dbReference type="TAIR" id="AT4G30840">
    <property type="gene designation" value="NUP43"/>
</dbReference>
<dbReference type="eggNOG" id="ENOG502QVRC">
    <property type="taxonomic scope" value="Eukaryota"/>
</dbReference>
<dbReference type="HOGENOM" id="CLU_795380_0_0_1"/>
<dbReference type="InParanoid" id="Q24JJ9"/>
<dbReference type="OMA" id="PCESEVW"/>
<dbReference type="PhylomeDB" id="Q24JJ9"/>
<dbReference type="PRO" id="PR:Q24JJ9"/>
<dbReference type="Proteomes" id="UP000006548">
    <property type="component" value="Chromosome 4"/>
</dbReference>
<dbReference type="ExpressionAtlas" id="Q24JJ9">
    <property type="expression patterns" value="baseline and differential"/>
</dbReference>
<dbReference type="GO" id="GO:0005635">
    <property type="term" value="C:nuclear envelope"/>
    <property type="evidence" value="ECO:0000314"/>
    <property type="project" value="TAIR"/>
</dbReference>
<dbReference type="GO" id="GO:0005643">
    <property type="term" value="C:nuclear pore"/>
    <property type="evidence" value="ECO:0007669"/>
    <property type="project" value="UniProtKB-SubCell"/>
</dbReference>
<dbReference type="GO" id="GO:0051028">
    <property type="term" value="P:mRNA transport"/>
    <property type="evidence" value="ECO:0007669"/>
    <property type="project" value="UniProtKB-KW"/>
</dbReference>
<dbReference type="GO" id="GO:0015031">
    <property type="term" value="P:protein transport"/>
    <property type="evidence" value="ECO:0007669"/>
    <property type="project" value="UniProtKB-KW"/>
</dbReference>
<dbReference type="FunFam" id="2.130.10.10:FF:000683">
    <property type="entry name" value="WD-40 repeat protein family"/>
    <property type="match status" value="1"/>
</dbReference>
<dbReference type="Gene3D" id="2.130.10.10">
    <property type="entry name" value="YVTN repeat-like/Quinoprotein amine dehydrogenase"/>
    <property type="match status" value="1"/>
</dbReference>
<dbReference type="InterPro" id="IPR015943">
    <property type="entry name" value="WD40/YVTN_repeat-like_dom_sf"/>
</dbReference>
<dbReference type="PANTHER" id="PTHR22652">
    <property type="entry name" value="NUCLEOPORIN NUP43"/>
    <property type="match status" value="1"/>
</dbReference>
<dbReference type="PANTHER" id="PTHR22652:SF0">
    <property type="entry name" value="NUCLEOPORIN NUP43"/>
    <property type="match status" value="1"/>
</dbReference>
<dbReference type="SUPFAM" id="SSF101908">
    <property type="entry name" value="Putative isomerase YbhE"/>
    <property type="match status" value="1"/>
</dbReference>
<organism evidence="8">
    <name type="scientific">Arabidopsis thaliana</name>
    <name type="common">Mouse-ear cress</name>
    <dbReference type="NCBI Taxonomy" id="3702"/>
    <lineage>
        <taxon>Eukaryota</taxon>
        <taxon>Viridiplantae</taxon>
        <taxon>Streptophyta</taxon>
        <taxon>Embryophyta</taxon>
        <taxon>Tracheophyta</taxon>
        <taxon>Spermatophyta</taxon>
        <taxon>Magnoliopsida</taxon>
        <taxon>eudicotyledons</taxon>
        <taxon>Gunneridae</taxon>
        <taxon>Pentapetalae</taxon>
        <taxon>rosids</taxon>
        <taxon>malvids</taxon>
        <taxon>Brassicales</taxon>
        <taxon>Brassicaceae</taxon>
        <taxon>Camelineae</taxon>
        <taxon>Arabidopsis</taxon>
    </lineage>
</organism>
<sequence length="361" mass="39354">MEMMQDSFQVHRIPQSKYVDGVRWLPQASALNRFFATASYDADCDSSSIEIQSLDPNPRGNHNTNPLIESLSSWTSPSRVSSLEVAGNGGGGGSFKPMVSAATSSGSLHVLMIDLVEGAAIEEFYAAEGERFHVGRVEGVDWREGGECVTVGEDGRVNVVKIVNGEGLRYRKVFDGNGLVAYRAVKWASPTEFVTGGYGFGLQLWDQRKSGEAVSQLKGNWFQGKTSAIVHSIDIHPSRKHTCIAGGSSGTVFAWDLRWPQQPIVLSGVGASENINNPLSESEVWEVQYDSYTKSNVSSSRILPVMTCSEDGILGIIEQGEEPIELLAEPCAINSFDIDRQNPQDVICSLEWESIAVFSRP</sequence>
<reference key="1">
    <citation type="journal article" date="1999" name="Nature">
        <title>Sequence and analysis of chromosome 4 of the plant Arabidopsis thaliana.</title>
        <authorList>
            <person name="Mayer K.F.X."/>
            <person name="Schueller C."/>
            <person name="Wambutt R."/>
            <person name="Murphy G."/>
            <person name="Volckaert G."/>
            <person name="Pohl T."/>
            <person name="Duesterhoeft A."/>
            <person name="Stiekema W."/>
            <person name="Entian K.-D."/>
            <person name="Terryn N."/>
            <person name="Harris B."/>
            <person name="Ansorge W."/>
            <person name="Brandt P."/>
            <person name="Grivell L.A."/>
            <person name="Rieger M."/>
            <person name="Weichselgartner M."/>
            <person name="de Simone V."/>
            <person name="Obermaier B."/>
            <person name="Mache R."/>
            <person name="Mueller M."/>
            <person name="Kreis M."/>
            <person name="Delseny M."/>
            <person name="Puigdomenech P."/>
            <person name="Watson M."/>
            <person name="Schmidtheini T."/>
            <person name="Reichert B."/>
            <person name="Portetelle D."/>
            <person name="Perez-Alonso M."/>
            <person name="Boutry M."/>
            <person name="Bancroft I."/>
            <person name="Vos P."/>
            <person name="Hoheisel J."/>
            <person name="Zimmermann W."/>
            <person name="Wedler H."/>
            <person name="Ridley P."/>
            <person name="Langham S.-A."/>
            <person name="McCullagh B."/>
            <person name="Bilham L."/>
            <person name="Robben J."/>
            <person name="van der Schueren J."/>
            <person name="Grymonprez B."/>
            <person name="Chuang Y.-J."/>
            <person name="Vandenbussche F."/>
            <person name="Braeken M."/>
            <person name="Weltjens I."/>
            <person name="Voet M."/>
            <person name="Bastiaens I."/>
            <person name="Aert R."/>
            <person name="Defoor E."/>
            <person name="Weitzenegger T."/>
            <person name="Bothe G."/>
            <person name="Ramsperger U."/>
            <person name="Hilbert H."/>
            <person name="Braun M."/>
            <person name="Holzer E."/>
            <person name="Brandt A."/>
            <person name="Peters S."/>
            <person name="van Staveren M."/>
            <person name="Dirkse W."/>
            <person name="Mooijman P."/>
            <person name="Klein Lankhorst R."/>
            <person name="Rose M."/>
            <person name="Hauf J."/>
            <person name="Koetter P."/>
            <person name="Berneiser S."/>
            <person name="Hempel S."/>
            <person name="Feldpausch M."/>
            <person name="Lamberth S."/>
            <person name="Van den Daele H."/>
            <person name="De Keyser A."/>
            <person name="Buysshaert C."/>
            <person name="Gielen J."/>
            <person name="Villarroel R."/>
            <person name="De Clercq R."/>
            <person name="van Montagu M."/>
            <person name="Rogers J."/>
            <person name="Cronin A."/>
            <person name="Quail M.A."/>
            <person name="Bray-Allen S."/>
            <person name="Clark L."/>
            <person name="Doggett J."/>
            <person name="Hall S."/>
            <person name="Kay M."/>
            <person name="Lennard N."/>
            <person name="McLay K."/>
            <person name="Mayes R."/>
            <person name="Pettett A."/>
            <person name="Rajandream M.A."/>
            <person name="Lyne M."/>
            <person name="Benes V."/>
            <person name="Rechmann S."/>
            <person name="Borkova D."/>
            <person name="Bloecker H."/>
            <person name="Scharfe M."/>
            <person name="Grimm M."/>
            <person name="Loehnert T.-H."/>
            <person name="Dose S."/>
            <person name="de Haan M."/>
            <person name="Maarse A.C."/>
            <person name="Schaefer M."/>
            <person name="Mueller-Auer S."/>
            <person name="Gabel C."/>
            <person name="Fuchs M."/>
            <person name="Fartmann B."/>
            <person name="Granderath K."/>
            <person name="Dauner D."/>
            <person name="Herzl A."/>
            <person name="Neumann S."/>
            <person name="Argiriou A."/>
            <person name="Vitale D."/>
            <person name="Liguori R."/>
            <person name="Piravandi E."/>
            <person name="Massenet O."/>
            <person name="Quigley F."/>
            <person name="Clabauld G."/>
            <person name="Muendlein A."/>
            <person name="Felber R."/>
            <person name="Schnabl S."/>
            <person name="Hiller R."/>
            <person name="Schmidt W."/>
            <person name="Lecharny A."/>
            <person name="Aubourg S."/>
            <person name="Chefdor F."/>
            <person name="Cooke R."/>
            <person name="Berger C."/>
            <person name="Monfort A."/>
            <person name="Casacuberta E."/>
            <person name="Gibbons T."/>
            <person name="Weber N."/>
            <person name="Vandenbol M."/>
            <person name="Bargues M."/>
            <person name="Terol J."/>
            <person name="Torres A."/>
            <person name="Perez-Perez A."/>
            <person name="Purnelle B."/>
            <person name="Bent E."/>
            <person name="Johnson S."/>
            <person name="Tacon D."/>
            <person name="Jesse T."/>
            <person name="Heijnen L."/>
            <person name="Schwarz S."/>
            <person name="Scholler P."/>
            <person name="Heber S."/>
            <person name="Francs P."/>
            <person name="Bielke C."/>
            <person name="Frishman D."/>
            <person name="Haase D."/>
            <person name="Lemcke K."/>
            <person name="Mewes H.-W."/>
            <person name="Stocker S."/>
            <person name="Zaccaria P."/>
            <person name="Bevan M."/>
            <person name="Wilson R.K."/>
            <person name="de la Bastide M."/>
            <person name="Habermann K."/>
            <person name="Parnell L."/>
            <person name="Dedhia N."/>
            <person name="Gnoj L."/>
            <person name="Schutz K."/>
            <person name="Huang E."/>
            <person name="Spiegel L."/>
            <person name="Sekhon M."/>
            <person name="Murray J."/>
            <person name="Sheet P."/>
            <person name="Cordes M."/>
            <person name="Abu-Threideh J."/>
            <person name="Stoneking T."/>
            <person name="Kalicki J."/>
            <person name="Graves T."/>
            <person name="Harmon G."/>
            <person name="Edwards J."/>
            <person name="Latreille P."/>
            <person name="Courtney L."/>
            <person name="Cloud J."/>
            <person name="Abbott A."/>
            <person name="Scott K."/>
            <person name="Johnson D."/>
            <person name="Minx P."/>
            <person name="Bentley D."/>
            <person name="Fulton B."/>
            <person name="Miller N."/>
            <person name="Greco T."/>
            <person name="Kemp K."/>
            <person name="Kramer J."/>
            <person name="Fulton L."/>
            <person name="Mardis E."/>
            <person name="Dante M."/>
            <person name="Pepin K."/>
            <person name="Hillier L.W."/>
            <person name="Nelson J."/>
            <person name="Spieth J."/>
            <person name="Ryan E."/>
            <person name="Andrews S."/>
            <person name="Geisel C."/>
            <person name="Layman D."/>
            <person name="Du H."/>
            <person name="Ali J."/>
            <person name="Berghoff A."/>
            <person name="Jones K."/>
            <person name="Drone K."/>
            <person name="Cotton M."/>
            <person name="Joshu C."/>
            <person name="Antonoiu B."/>
            <person name="Zidanic M."/>
            <person name="Strong C."/>
            <person name="Sun H."/>
            <person name="Lamar B."/>
            <person name="Yordan C."/>
            <person name="Ma P."/>
            <person name="Zhong J."/>
            <person name="Preston R."/>
            <person name="Vil D."/>
            <person name="Shekher M."/>
            <person name="Matero A."/>
            <person name="Shah R."/>
            <person name="Swaby I.K."/>
            <person name="O'Shaughnessy A."/>
            <person name="Rodriguez M."/>
            <person name="Hoffman J."/>
            <person name="Till S."/>
            <person name="Granat S."/>
            <person name="Shohdy N."/>
            <person name="Hasegawa A."/>
            <person name="Hameed A."/>
            <person name="Lodhi M."/>
            <person name="Johnson A."/>
            <person name="Chen E."/>
            <person name="Marra M.A."/>
            <person name="Martienssen R."/>
            <person name="McCombie W.R."/>
        </authorList>
    </citation>
    <scope>NUCLEOTIDE SEQUENCE [LARGE SCALE GENOMIC DNA]</scope>
    <source>
        <strain>cv. Columbia</strain>
    </source>
</reference>
<reference key="2">
    <citation type="journal article" date="2017" name="Plant J.">
        <title>Araport11: a complete reannotation of the Arabidopsis thaliana reference genome.</title>
        <authorList>
            <person name="Cheng C.Y."/>
            <person name="Krishnakumar V."/>
            <person name="Chan A.P."/>
            <person name="Thibaud-Nissen F."/>
            <person name="Schobel S."/>
            <person name="Town C.D."/>
        </authorList>
    </citation>
    <scope>GENOME REANNOTATION</scope>
    <source>
        <strain>cv. Columbia</strain>
    </source>
</reference>
<reference key="3">
    <citation type="submission" date="2006-03" db="EMBL/GenBank/DDBJ databases">
        <title>Arabidopsis ORF clones.</title>
        <authorList>
            <person name="Shinn P."/>
            <person name="Chen H."/>
            <person name="Kim C.J."/>
            <person name="Ecker J.R."/>
        </authorList>
    </citation>
    <scope>NUCLEOTIDE SEQUENCE [LARGE SCALE MRNA]</scope>
    <source>
        <strain>cv. Columbia</strain>
    </source>
</reference>
<reference key="4">
    <citation type="submission" date="2002-03" db="EMBL/GenBank/DDBJ databases">
        <title>Full-length cDNA from Arabidopsis thaliana.</title>
        <authorList>
            <person name="Brover V.V."/>
            <person name="Troukhan M.E."/>
            <person name="Alexandrov N.A."/>
            <person name="Lu Y.-P."/>
            <person name="Flavell R.B."/>
            <person name="Feldmann K.A."/>
        </authorList>
    </citation>
    <scope>NUCLEOTIDE SEQUENCE [LARGE SCALE MRNA]</scope>
</reference>
<reference key="5">
    <citation type="journal article" date="2010" name="Plant Cell">
        <title>Identification and characterization of nuclear pore complex components in Arabidopsis thaliana.</title>
        <authorList>
            <person name="Tamura K."/>
            <person name="Fukao Y."/>
            <person name="Iwamoto M."/>
            <person name="Haraguchi T."/>
            <person name="Hara-Nishimura I."/>
        </authorList>
    </citation>
    <scope>IDENTIFICATION IN THE NUCLEAR PORE COMPLEX</scope>
    <scope>SUBCELLULAR LOCATION</scope>
    <scope>NOMENCLATURE</scope>
</reference>
<comment type="subunit">
    <text evidence="6">Part of the nuclear pore complex (NPC). The NPC has an eight-fold symmetrical structure comprising a central transport channel and two rings, the cytoplasmic and nuclear rings, to which eight filaments are attached. The cytoplasmic filaments have loose ends, while the nuclear filaments are joined in a distal ring, forming a nuclear basket. NPCs are highly dynamic in configuration and composition, and can be devided in 3 subcomplexes, the NUP62 subcomplex, the NUP107-160 subcomplex and the NUP93 subcomplex, containing approximately 30 different nucleoporin proteins.</text>
</comment>
<comment type="subcellular location">
    <subcellularLocation>
        <location evidence="3">Nucleus envelope</location>
    </subcellularLocation>
    <subcellularLocation>
        <location evidence="6">Nucleus</location>
        <location evidence="6">Nuclear pore complex</location>
    </subcellularLocation>
</comment>
<comment type="sequence caution" evidence="5">
    <conflict type="erroneous initiation">
        <sequence resource="EMBL-CDS" id="AAM63718"/>
    </conflict>
    <text>Truncated N-terminus.</text>
</comment>
<comment type="sequence caution" evidence="5">
    <conflict type="erroneous gene model prediction">
        <sequence resource="EMBL-CDS" id="CAA18209"/>
    </conflict>
</comment>
<comment type="sequence caution" evidence="5">
    <conflict type="erroneous gene model prediction">
        <sequence resource="EMBL-CDS" id="CAB79802"/>
    </conflict>
</comment>
<evidence type="ECO:0000255" key="1"/>
<evidence type="ECO:0000256" key="2">
    <source>
        <dbReference type="SAM" id="MobiDB-lite"/>
    </source>
</evidence>
<evidence type="ECO:0000269" key="3">
    <source>
    </source>
</evidence>
<evidence type="ECO:0000303" key="4">
    <source>
    </source>
</evidence>
<evidence type="ECO:0000305" key="5"/>
<evidence type="ECO:0000305" key="6">
    <source>
    </source>
</evidence>
<evidence type="ECO:0000312" key="7">
    <source>
        <dbReference type="Araport" id="AT4G30840"/>
    </source>
</evidence>
<evidence type="ECO:0000312" key="8">
    <source>
        <dbReference type="EMBL" id="ABD85161.1"/>
    </source>
</evidence>
<evidence type="ECO:0000312" key="9">
    <source>
        <dbReference type="EMBL" id="CAA18209.1"/>
    </source>
</evidence>